<proteinExistence type="inferred from homology"/>
<organism>
    <name type="scientific">Syntrophobacter fumaroxidans (strain DSM 10017 / MPOB)</name>
    <dbReference type="NCBI Taxonomy" id="335543"/>
    <lineage>
        <taxon>Bacteria</taxon>
        <taxon>Pseudomonadati</taxon>
        <taxon>Thermodesulfobacteriota</taxon>
        <taxon>Syntrophobacteria</taxon>
        <taxon>Syntrophobacterales</taxon>
        <taxon>Syntrophobacteraceae</taxon>
        <taxon>Syntrophobacter</taxon>
    </lineage>
</organism>
<comment type="function">
    <text evidence="1">Increases the formation of ribosomal termination complexes and stimulates activities of RF-1 and RF-2. It binds guanine nucleotides and has strong preference for UGA stop codons. It may interact directly with the ribosome. The stimulation of RF-1 and RF-2 is significantly reduced by GTP and GDP, but not by GMP.</text>
</comment>
<comment type="subcellular location">
    <subcellularLocation>
        <location evidence="1">Cytoplasm</location>
    </subcellularLocation>
</comment>
<comment type="similarity">
    <text evidence="1">Belongs to the TRAFAC class translation factor GTPase superfamily. Classic translation factor GTPase family. PrfC subfamily.</text>
</comment>
<keyword id="KW-0963">Cytoplasm</keyword>
<keyword id="KW-0342">GTP-binding</keyword>
<keyword id="KW-0547">Nucleotide-binding</keyword>
<keyword id="KW-0648">Protein biosynthesis</keyword>
<keyword id="KW-1185">Reference proteome</keyword>
<reference key="1">
    <citation type="submission" date="2006-10" db="EMBL/GenBank/DDBJ databases">
        <title>Complete sequence of Syntrophobacter fumaroxidans MPOB.</title>
        <authorList>
            <consortium name="US DOE Joint Genome Institute"/>
            <person name="Copeland A."/>
            <person name="Lucas S."/>
            <person name="Lapidus A."/>
            <person name="Barry K."/>
            <person name="Detter J.C."/>
            <person name="Glavina del Rio T."/>
            <person name="Hammon N."/>
            <person name="Israni S."/>
            <person name="Pitluck S."/>
            <person name="Goltsman E.G."/>
            <person name="Martinez M."/>
            <person name="Schmutz J."/>
            <person name="Larimer F."/>
            <person name="Land M."/>
            <person name="Hauser L."/>
            <person name="Kyrpides N."/>
            <person name="Kim E."/>
            <person name="Boone D.R."/>
            <person name="Brockman F."/>
            <person name="Culley D."/>
            <person name="Ferry J."/>
            <person name="Gunsalus R."/>
            <person name="McInerney M.J."/>
            <person name="Morrison M."/>
            <person name="Plugge C."/>
            <person name="Rohlin L."/>
            <person name="Scholten J."/>
            <person name="Sieber J."/>
            <person name="Stams A.J.M."/>
            <person name="Worm P."/>
            <person name="Henstra A.M."/>
            <person name="Richardson P."/>
        </authorList>
    </citation>
    <scope>NUCLEOTIDE SEQUENCE [LARGE SCALE GENOMIC DNA]</scope>
    <source>
        <strain>DSM 10017 / MPOB</strain>
    </source>
</reference>
<name>RF3_SYNFM</name>
<dbReference type="EMBL" id="CP000478">
    <property type="protein sequence ID" value="ABK18320.1"/>
    <property type="molecule type" value="Genomic_DNA"/>
</dbReference>
<dbReference type="RefSeq" id="WP_011699487.1">
    <property type="nucleotide sequence ID" value="NC_008554.1"/>
</dbReference>
<dbReference type="SMR" id="A0LLL8"/>
<dbReference type="FunCoup" id="A0LLL8">
    <property type="interactions" value="230"/>
</dbReference>
<dbReference type="STRING" id="335543.Sfum_2642"/>
<dbReference type="KEGG" id="sfu:Sfum_2642"/>
<dbReference type="eggNOG" id="COG4108">
    <property type="taxonomic scope" value="Bacteria"/>
</dbReference>
<dbReference type="HOGENOM" id="CLU_002794_2_1_7"/>
<dbReference type="InParanoid" id="A0LLL8"/>
<dbReference type="OrthoDB" id="9760518at2"/>
<dbReference type="Proteomes" id="UP000001784">
    <property type="component" value="Chromosome"/>
</dbReference>
<dbReference type="GO" id="GO:0005829">
    <property type="term" value="C:cytosol"/>
    <property type="evidence" value="ECO:0007669"/>
    <property type="project" value="TreeGrafter"/>
</dbReference>
<dbReference type="GO" id="GO:0005525">
    <property type="term" value="F:GTP binding"/>
    <property type="evidence" value="ECO:0007669"/>
    <property type="project" value="UniProtKB-UniRule"/>
</dbReference>
<dbReference type="GO" id="GO:0003924">
    <property type="term" value="F:GTPase activity"/>
    <property type="evidence" value="ECO:0007669"/>
    <property type="project" value="InterPro"/>
</dbReference>
<dbReference type="GO" id="GO:0016150">
    <property type="term" value="F:translation release factor activity, codon nonspecific"/>
    <property type="evidence" value="ECO:0007669"/>
    <property type="project" value="TreeGrafter"/>
</dbReference>
<dbReference type="GO" id="GO:0016149">
    <property type="term" value="F:translation release factor activity, codon specific"/>
    <property type="evidence" value="ECO:0007669"/>
    <property type="project" value="UniProtKB-UniRule"/>
</dbReference>
<dbReference type="GO" id="GO:0006449">
    <property type="term" value="P:regulation of translational termination"/>
    <property type="evidence" value="ECO:0007669"/>
    <property type="project" value="UniProtKB-UniRule"/>
</dbReference>
<dbReference type="CDD" id="cd04169">
    <property type="entry name" value="RF3"/>
    <property type="match status" value="1"/>
</dbReference>
<dbReference type="CDD" id="cd03689">
    <property type="entry name" value="RF3_II"/>
    <property type="match status" value="1"/>
</dbReference>
<dbReference type="CDD" id="cd16259">
    <property type="entry name" value="RF3_III"/>
    <property type="match status" value="1"/>
</dbReference>
<dbReference type="FunFam" id="2.40.30.10:FF:000040">
    <property type="entry name" value="Peptide chain release factor 3"/>
    <property type="match status" value="1"/>
</dbReference>
<dbReference type="FunFam" id="3.30.70.3280:FF:000001">
    <property type="entry name" value="Peptide chain release factor 3"/>
    <property type="match status" value="1"/>
</dbReference>
<dbReference type="FunFam" id="3.40.50.300:FF:000542">
    <property type="entry name" value="Peptide chain release factor 3"/>
    <property type="match status" value="1"/>
</dbReference>
<dbReference type="Gene3D" id="3.40.50.300">
    <property type="entry name" value="P-loop containing nucleotide triphosphate hydrolases"/>
    <property type="match status" value="2"/>
</dbReference>
<dbReference type="Gene3D" id="3.30.70.3280">
    <property type="entry name" value="Peptide chain release factor 3, domain III"/>
    <property type="match status" value="1"/>
</dbReference>
<dbReference type="HAMAP" id="MF_00072">
    <property type="entry name" value="Rel_fac_3"/>
    <property type="match status" value="1"/>
</dbReference>
<dbReference type="InterPro" id="IPR053905">
    <property type="entry name" value="EF-G-like_DII"/>
</dbReference>
<dbReference type="InterPro" id="IPR035647">
    <property type="entry name" value="EFG_III/V"/>
</dbReference>
<dbReference type="InterPro" id="IPR031157">
    <property type="entry name" value="G_TR_CS"/>
</dbReference>
<dbReference type="InterPro" id="IPR027417">
    <property type="entry name" value="P-loop_NTPase"/>
</dbReference>
<dbReference type="InterPro" id="IPR004548">
    <property type="entry name" value="PrfC"/>
</dbReference>
<dbReference type="InterPro" id="IPR032090">
    <property type="entry name" value="RF3_C"/>
</dbReference>
<dbReference type="InterPro" id="IPR038467">
    <property type="entry name" value="RF3_dom_3_sf"/>
</dbReference>
<dbReference type="InterPro" id="IPR041732">
    <property type="entry name" value="RF3_GTP-bd"/>
</dbReference>
<dbReference type="InterPro" id="IPR005225">
    <property type="entry name" value="Small_GTP-bd"/>
</dbReference>
<dbReference type="InterPro" id="IPR000795">
    <property type="entry name" value="T_Tr_GTP-bd_dom"/>
</dbReference>
<dbReference type="InterPro" id="IPR009000">
    <property type="entry name" value="Transl_B-barrel_sf"/>
</dbReference>
<dbReference type="NCBIfam" id="TIGR00503">
    <property type="entry name" value="prfC"/>
    <property type="match status" value="1"/>
</dbReference>
<dbReference type="NCBIfam" id="NF001964">
    <property type="entry name" value="PRK00741.1"/>
    <property type="match status" value="1"/>
</dbReference>
<dbReference type="NCBIfam" id="TIGR00231">
    <property type="entry name" value="small_GTP"/>
    <property type="match status" value="1"/>
</dbReference>
<dbReference type="PANTHER" id="PTHR43556">
    <property type="entry name" value="PEPTIDE CHAIN RELEASE FACTOR RF3"/>
    <property type="match status" value="1"/>
</dbReference>
<dbReference type="PANTHER" id="PTHR43556:SF2">
    <property type="entry name" value="PEPTIDE CHAIN RELEASE FACTOR RF3"/>
    <property type="match status" value="1"/>
</dbReference>
<dbReference type="Pfam" id="PF22042">
    <property type="entry name" value="EF-G_D2"/>
    <property type="match status" value="1"/>
</dbReference>
<dbReference type="Pfam" id="PF00009">
    <property type="entry name" value="GTP_EFTU"/>
    <property type="match status" value="1"/>
</dbReference>
<dbReference type="Pfam" id="PF16658">
    <property type="entry name" value="RF3_C"/>
    <property type="match status" value="1"/>
</dbReference>
<dbReference type="PRINTS" id="PR00315">
    <property type="entry name" value="ELONGATNFCT"/>
</dbReference>
<dbReference type="SUPFAM" id="SSF54980">
    <property type="entry name" value="EF-G C-terminal domain-like"/>
    <property type="match status" value="1"/>
</dbReference>
<dbReference type="SUPFAM" id="SSF52540">
    <property type="entry name" value="P-loop containing nucleoside triphosphate hydrolases"/>
    <property type="match status" value="1"/>
</dbReference>
<dbReference type="SUPFAM" id="SSF50447">
    <property type="entry name" value="Translation proteins"/>
    <property type="match status" value="1"/>
</dbReference>
<dbReference type="PROSITE" id="PS00301">
    <property type="entry name" value="G_TR_1"/>
    <property type="match status" value="1"/>
</dbReference>
<dbReference type="PROSITE" id="PS51722">
    <property type="entry name" value="G_TR_2"/>
    <property type="match status" value="1"/>
</dbReference>
<feature type="chain" id="PRO_1000023693" description="Peptide chain release factor 3">
    <location>
        <begin position="1"/>
        <end position="528"/>
    </location>
</feature>
<feature type="domain" description="tr-type G">
    <location>
        <begin position="10"/>
        <end position="278"/>
    </location>
</feature>
<feature type="binding site" evidence="1">
    <location>
        <begin position="19"/>
        <end position="26"/>
    </location>
    <ligand>
        <name>GTP</name>
        <dbReference type="ChEBI" id="CHEBI:37565"/>
    </ligand>
</feature>
<feature type="binding site" evidence="1">
    <location>
        <begin position="87"/>
        <end position="91"/>
    </location>
    <ligand>
        <name>GTP</name>
        <dbReference type="ChEBI" id="CHEBI:37565"/>
    </ligand>
</feature>
<feature type="binding site" evidence="1">
    <location>
        <begin position="141"/>
        <end position="144"/>
    </location>
    <ligand>
        <name>GTP</name>
        <dbReference type="ChEBI" id="CHEBI:37565"/>
    </ligand>
</feature>
<protein>
    <recommendedName>
        <fullName evidence="1">Peptide chain release factor 3</fullName>
        <shortName evidence="1">RF-3</shortName>
    </recommendedName>
</protein>
<sequence length="528" mass="59592">MNHRHRQEIDRRRTFGIISHPDAGKTTLTEKLLLFGGAIQLAGAVKARKASRHATSDWMAIERERGISVTTSVMKFNYRDFEINLLDTPGHQDFSEDTYRVLTAVDSALMVIDSAKGVEPQTEKLMEVCRMRNTPIITFINKLDREGQSPLALLGEIEDKLQIECTPLSWPIGSGKSFKGVYDLLGKKLHLFAPGQETRTNGGMVFDDLSDAALDELLGRQAVQLREDVELLEGAANPLEQEHYLRGNQTPVFFGSALNNFGVRELLDAFVQMAPPPHARPTVSREVSPYEDQFSGFVFKIQANMDPAHRDRIAFLRICSGKYTRGMKVIHHRAGREMNIANATIFLAQDRTNIDEAYPGDIIGIHNHGTIKIGDTFTEKEPLRFTGIPSFAPEHFRRVILKNPLKVKQLRKGLAQLTEEGAVQVFRPLAARDYILGAVGVLQFDVTVARLRTEYGVDADYEPAGYAAARWVESDSRNVMEEFEKENRGSLALDGEDRLTYLAPNEWRLGFVMEDWPRIRFRKSMECN</sequence>
<gene>
    <name evidence="1" type="primary">prfC</name>
    <name type="ordered locus">Sfum_2642</name>
</gene>
<accession>A0LLL8</accession>
<evidence type="ECO:0000255" key="1">
    <source>
        <dbReference type="HAMAP-Rule" id="MF_00072"/>
    </source>
</evidence>